<sequence length="304" mass="33592">MWFKNLTLYRFNKPFSIETEALETALADFTFSPCGSQDVSKFGFSNALGKQGSTLVHSANNRHLICVTKEEKILPGQVIKESLEEKVALIEDEENRKLAKKEKDALKDEIITSLLPRAFSRRSQTRALILPELEMILVDSSSATKAEELLALLRKALGSLPVIPLSFKAPVESNLTQWLKDGSAPLPFEMQDEAELKSAADEGGIVRFKQQDLKEDEVLAHLETGKEVHKLALHFGQSIALLLQSDASVKRLKFSEEFRAGNDELGNEDPMARLDADFALMGSELVALMHALVSALGGLEETQA</sequence>
<protein>
    <recommendedName>
        <fullName evidence="1">Recombination-associated protein RdgC</fullName>
    </recommendedName>
</protein>
<name>RDGC_SHESR</name>
<reference key="1">
    <citation type="submission" date="2006-08" db="EMBL/GenBank/DDBJ databases">
        <title>Complete sequence of chromosome 1 of Shewanella sp. MR-7.</title>
        <authorList>
            <person name="Copeland A."/>
            <person name="Lucas S."/>
            <person name="Lapidus A."/>
            <person name="Barry K."/>
            <person name="Detter J.C."/>
            <person name="Glavina del Rio T."/>
            <person name="Hammon N."/>
            <person name="Israni S."/>
            <person name="Dalin E."/>
            <person name="Tice H."/>
            <person name="Pitluck S."/>
            <person name="Kiss H."/>
            <person name="Brettin T."/>
            <person name="Bruce D."/>
            <person name="Han C."/>
            <person name="Tapia R."/>
            <person name="Gilna P."/>
            <person name="Schmutz J."/>
            <person name="Larimer F."/>
            <person name="Land M."/>
            <person name="Hauser L."/>
            <person name="Kyrpides N."/>
            <person name="Mikhailova N."/>
            <person name="Nealson K."/>
            <person name="Konstantinidis K."/>
            <person name="Klappenbach J."/>
            <person name="Tiedje J."/>
            <person name="Richardson P."/>
        </authorList>
    </citation>
    <scope>NUCLEOTIDE SEQUENCE [LARGE SCALE GENOMIC DNA]</scope>
    <source>
        <strain>MR-7</strain>
    </source>
</reference>
<feature type="chain" id="PRO_1000021236" description="Recombination-associated protein RdgC">
    <location>
        <begin position="1"/>
        <end position="304"/>
    </location>
</feature>
<accession>Q0HSZ1</accession>
<organism>
    <name type="scientific">Shewanella sp. (strain MR-7)</name>
    <dbReference type="NCBI Taxonomy" id="60481"/>
    <lineage>
        <taxon>Bacteria</taxon>
        <taxon>Pseudomonadati</taxon>
        <taxon>Pseudomonadota</taxon>
        <taxon>Gammaproteobacteria</taxon>
        <taxon>Alteromonadales</taxon>
        <taxon>Shewanellaceae</taxon>
        <taxon>Shewanella</taxon>
    </lineage>
</organism>
<keyword id="KW-0963">Cytoplasm</keyword>
<keyword id="KW-0233">DNA recombination</keyword>
<gene>
    <name evidence="1" type="primary">rdgC</name>
    <name type="ordered locus">Shewmr7_2779</name>
</gene>
<dbReference type="EMBL" id="CP000444">
    <property type="protein sequence ID" value="ABI43764.1"/>
    <property type="molecule type" value="Genomic_DNA"/>
</dbReference>
<dbReference type="SMR" id="Q0HSZ1"/>
<dbReference type="KEGG" id="shm:Shewmr7_2779"/>
<dbReference type="HOGENOM" id="CLU_052038_1_1_6"/>
<dbReference type="GO" id="GO:0043590">
    <property type="term" value="C:bacterial nucleoid"/>
    <property type="evidence" value="ECO:0007669"/>
    <property type="project" value="TreeGrafter"/>
</dbReference>
<dbReference type="GO" id="GO:0005737">
    <property type="term" value="C:cytoplasm"/>
    <property type="evidence" value="ECO:0007669"/>
    <property type="project" value="UniProtKB-UniRule"/>
</dbReference>
<dbReference type="GO" id="GO:0003690">
    <property type="term" value="F:double-stranded DNA binding"/>
    <property type="evidence" value="ECO:0007669"/>
    <property type="project" value="TreeGrafter"/>
</dbReference>
<dbReference type="GO" id="GO:0006310">
    <property type="term" value="P:DNA recombination"/>
    <property type="evidence" value="ECO:0007669"/>
    <property type="project" value="UniProtKB-UniRule"/>
</dbReference>
<dbReference type="GO" id="GO:0000018">
    <property type="term" value="P:regulation of DNA recombination"/>
    <property type="evidence" value="ECO:0007669"/>
    <property type="project" value="TreeGrafter"/>
</dbReference>
<dbReference type="HAMAP" id="MF_00194">
    <property type="entry name" value="RdgC"/>
    <property type="match status" value="1"/>
</dbReference>
<dbReference type="InterPro" id="IPR007476">
    <property type="entry name" value="RdgC"/>
</dbReference>
<dbReference type="NCBIfam" id="NF001462">
    <property type="entry name" value="PRK00321.1-3"/>
    <property type="match status" value="1"/>
</dbReference>
<dbReference type="NCBIfam" id="NF001464">
    <property type="entry name" value="PRK00321.1-5"/>
    <property type="match status" value="1"/>
</dbReference>
<dbReference type="PANTHER" id="PTHR38103">
    <property type="entry name" value="RECOMBINATION-ASSOCIATED PROTEIN RDGC"/>
    <property type="match status" value="1"/>
</dbReference>
<dbReference type="PANTHER" id="PTHR38103:SF1">
    <property type="entry name" value="RECOMBINATION-ASSOCIATED PROTEIN RDGC"/>
    <property type="match status" value="1"/>
</dbReference>
<dbReference type="Pfam" id="PF04381">
    <property type="entry name" value="RdgC"/>
    <property type="match status" value="1"/>
</dbReference>
<proteinExistence type="inferred from homology"/>
<comment type="function">
    <text evidence="1">May be involved in recombination.</text>
</comment>
<comment type="subcellular location">
    <subcellularLocation>
        <location evidence="1">Cytoplasm</location>
        <location evidence="1">Nucleoid</location>
    </subcellularLocation>
</comment>
<comment type="similarity">
    <text evidence="1">Belongs to the RdgC family.</text>
</comment>
<evidence type="ECO:0000255" key="1">
    <source>
        <dbReference type="HAMAP-Rule" id="MF_00194"/>
    </source>
</evidence>